<organism>
    <name type="scientific">Naja annulifera</name>
    <name type="common">Banded Egyptian cobra</name>
    <name type="synonym">Naja haje annulifera</name>
    <dbReference type="NCBI Taxonomy" id="96794"/>
    <lineage>
        <taxon>Eukaryota</taxon>
        <taxon>Metazoa</taxon>
        <taxon>Chordata</taxon>
        <taxon>Craniata</taxon>
        <taxon>Vertebrata</taxon>
        <taxon>Euteleostomi</taxon>
        <taxon>Lepidosauria</taxon>
        <taxon>Squamata</taxon>
        <taxon>Bifurcata</taxon>
        <taxon>Unidentata</taxon>
        <taxon>Episquamata</taxon>
        <taxon>Toxicofera</taxon>
        <taxon>Serpentes</taxon>
        <taxon>Colubroidea</taxon>
        <taxon>Elapidae</taxon>
        <taxon>Elapinae</taxon>
        <taxon>Naja</taxon>
    </lineage>
</organism>
<name>3S12_NAJHA</name>
<reference key="1">
    <citation type="journal article" date="1975" name="Hoppe-Seyler's Z. Physiol. Chem.">
        <title>The amino acid sequences of three toxins (CM-10, CM-12 and CM-14) from Naja haje annulifera (Egyptian cobra) venom.</title>
        <authorList>
            <person name="Joubert F.J."/>
        </authorList>
    </citation>
    <scope>PROTEIN SEQUENCE</scope>
    <scope>TOXIC DOSE</scope>
    <scope>SUBCELLULAR LOCATION</scope>
    <source>
        <tissue>Venom</tissue>
    </source>
</reference>
<proteinExistence type="evidence at protein level"/>
<protein>
    <recommendedName>
        <fullName>Short neurotoxin 2</fullName>
    </recommendedName>
    <alternativeName>
        <fullName>Toxin CM-14</fullName>
    </alternativeName>
    <alternativeName>
        <fullName>Toxin V-N-I2</fullName>
    </alternativeName>
</protein>
<sequence>MICHNQQSSQPPTIKTCPGETNCYKKRWRDHRGTIIERGCGCPSVKKGVGIYCCKTNKCNR</sequence>
<keyword id="KW-0008">Acetylcholine receptor inhibiting toxin</keyword>
<keyword id="KW-0903">Direct protein sequencing</keyword>
<keyword id="KW-1015">Disulfide bond</keyword>
<keyword id="KW-0872">Ion channel impairing toxin</keyword>
<keyword id="KW-0528">Neurotoxin</keyword>
<keyword id="KW-0629">Postsynaptic neurotoxin</keyword>
<keyword id="KW-0964">Secreted</keyword>
<keyword id="KW-0800">Toxin</keyword>
<dbReference type="PIR" id="A01691">
    <property type="entry name" value="N1NJ2E"/>
</dbReference>
<dbReference type="SMR" id="P01422"/>
<dbReference type="GO" id="GO:0005576">
    <property type="term" value="C:extracellular region"/>
    <property type="evidence" value="ECO:0007669"/>
    <property type="project" value="UniProtKB-SubCell"/>
</dbReference>
<dbReference type="GO" id="GO:0030550">
    <property type="term" value="F:acetylcholine receptor inhibitor activity"/>
    <property type="evidence" value="ECO:0007669"/>
    <property type="project" value="UniProtKB-KW"/>
</dbReference>
<dbReference type="GO" id="GO:0099106">
    <property type="term" value="F:ion channel regulator activity"/>
    <property type="evidence" value="ECO:0007669"/>
    <property type="project" value="UniProtKB-KW"/>
</dbReference>
<dbReference type="GO" id="GO:0090729">
    <property type="term" value="F:toxin activity"/>
    <property type="evidence" value="ECO:0007669"/>
    <property type="project" value="UniProtKB-KW"/>
</dbReference>
<dbReference type="CDD" id="cd00206">
    <property type="entry name" value="TFP_snake_toxin"/>
    <property type="match status" value="1"/>
</dbReference>
<dbReference type="FunFam" id="2.10.60.10:FF:000024">
    <property type="entry name" value="Cytotoxin 1"/>
    <property type="match status" value="1"/>
</dbReference>
<dbReference type="Gene3D" id="2.10.60.10">
    <property type="entry name" value="CD59"/>
    <property type="match status" value="1"/>
</dbReference>
<dbReference type="InterPro" id="IPR003571">
    <property type="entry name" value="Snake_3FTx"/>
</dbReference>
<dbReference type="InterPro" id="IPR045860">
    <property type="entry name" value="Snake_toxin-like_sf"/>
</dbReference>
<dbReference type="InterPro" id="IPR018354">
    <property type="entry name" value="Snake_toxin_con_site"/>
</dbReference>
<dbReference type="InterPro" id="IPR054131">
    <property type="entry name" value="Toxin_cobra-type"/>
</dbReference>
<dbReference type="Pfam" id="PF21947">
    <property type="entry name" value="Toxin_cobra-type"/>
    <property type="match status" value="1"/>
</dbReference>
<dbReference type="SUPFAM" id="SSF57302">
    <property type="entry name" value="Snake toxin-like"/>
    <property type="match status" value="1"/>
</dbReference>
<dbReference type="PROSITE" id="PS00272">
    <property type="entry name" value="SNAKE_TOXIN"/>
    <property type="match status" value="1"/>
</dbReference>
<evidence type="ECO:0000250" key="1">
    <source>
        <dbReference type="UniProtKB" id="P0C1Z0"/>
    </source>
</evidence>
<evidence type="ECO:0000250" key="2">
    <source>
        <dbReference type="UniProtKB" id="P60775"/>
    </source>
</evidence>
<evidence type="ECO:0000269" key="3">
    <source ref="1"/>
</evidence>
<evidence type="ECO:0000305" key="4"/>
<feature type="chain" id="PRO_0000093597" description="Short neurotoxin 2" evidence="3">
    <location>
        <begin position="1"/>
        <end position="61"/>
    </location>
</feature>
<feature type="disulfide bond" evidence="1">
    <location>
        <begin position="3"/>
        <end position="23"/>
    </location>
</feature>
<feature type="disulfide bond" evidence="1">
    <location>
        <begin position="17"/>
        <end position="40"/>
    </location>
</feature>
<feature type="disulfide bond" evidence="1">
    <location>
        <begin position="42"/>
        <end position="53"/>
    </location>
</feature>
<feature type="disulfide bond" evidence="1">
    <location>
        <begin position="54"/>
        <end position="59"/>
    </location>
</feature>
<comment type="function">
    <text evidence="2">Binds to muscle nicotinic acetylcholine receptor (nAChR) and inhibit acetylcholine from binding to the receptor, thereby impairing neuromuscular transmission.</text>
</comment>
<comment type="subcellular location">
    <subcellularLocation>
        <location evidence="3">Secreted</location>
    </subcellularLocation>
</comment>
<comment type="tissue specificity">
    <text evidence="4">Expressed by the venom gland.</text>
</comment>
<comment type="toxic dose">
    <text evidence="3">LD(50) is 0.12 mg/kg by subcutaneous injection.</text>
</comment>
<comment type="similarity">
    <text evidence="4">Belongs to the three-finger toxin family. Short-chain subfamily. Type I alpha-neurotoxin sub-subfamily.</text>
</comment>
<accession>P01422</accession>